<reference key="1">
    <citation type="submission" date="2003-10" db="EMBL/GenBank/DDBJ databases">
        <title>The complete genome sequence of the alkaliphilic Bacillus clausii KSM-K16.</title>
        <authorList>
            <person name="Takaki Y."/>
            <person name="Kageyama Y."/>
            <person name="Shimamura S."/>
            <person name="Suzuki H."/>
            <person name="Nishi S."/>
            <person name="Hatada Y."/>
            <person name="Kawai S."/>
            <person name="Ito S."/>
            <person name="Horikoshi K."/>
        </authorList>
    </citation>
    <scope>NUCLEOTIDE SEQUENCE [LARGE SCALE GENOMIC DNA]</scope>
    <source>
        <strain>KSM-K16</strain>
    </source>
</reference>
<dbReference type="EC" id="5.4.99.25" evidence="1"/>
<dbReference type="EMBL" id="AP006627">
    <property type="protein sequence ID" value="BAD64760.1"/>
    <property type="molecule type" value="Genomic_DNA"/>
</dbReference>
<dbReference type="RefSeq" id="WP_011247068.1">
    <property type="nucleotide sequence ID" value="NC_006582.1"/>
</dbReference>
<dbReference type="SMR" id="Q5WFU5"/>
<dbReference type="STRING" id="66692.ABC2225"/>
<dbReference type="KEGG" id="bcl:ABC2225"/>
<dbReference type="eggNOG" id="COG0130">
    <property type="taxonomic scope" value="Bacteria"/>
</dbReference>
<dbReference type="HOGENOM" id="CLU_032087_0_1_9"/>
<dbReference type="OrthoDB" id="9802309at2"/>
<dbReference type="Proteomes" id="UP000001168">
    <property type="component" value="Chromosome"/>
</dbReference>
<dbReference type="GO" id="GO:0003723">
    <property type="term" value="F:RNA binding"/>
    <property type="evidence" value="ECO:0007669"/>
    <property type="project" value="InterPro"/>
</dbReference>
<dbReference type="GO" id="GO:0160148">
    <property type="term" value="F:tRNA pseudouridine(55) synthase activity"/>
    <property type="evidence" value="ECO:0007669"/>
    <property type="project" value="UniProtKB-EC"/>
</dbReference>
<dbReference type="GO" id="GO:1990481">
    <property type="term" value="P:mRNA pseudouridine synthesis"/>
    <property type="evidence" value="ECO:0007669"/>
    <property type="project" value="TreeGrafter"/>
</dbReference>
<dbReference type="GO" id="GO:0031119">
    <property type="term" value="P:tRNA pseudouridine synthesis"/>
    <property type="evidence" value="ECO:0007669"/>
    <property type="project" value="UniProtKB-UniRule"/>
</dbReference>
<dbReference type="CDD" id="cd02573">
    <property type="entry name" value="PseudoU_synth_EcTruB"/>
    <property type="match status" value="1"/>
</dbReference>
<dbReference type="FunFam" id="3.30.2350.10:FF:000011">
    <property type="entry name" value="tRNA pseudouridine synthase B"/>
    <property type="match status" value="1"/>
</dbReference>
<dbReference type="Gene3D" id="3.30.2350.10">
    <property type="entry name" value="Pseudouridine synthase"/>
    <property type="match status" value="1"/>
</dbReference>
<dbReference type="HAMAP" id="MF_01080">
    <property type="entry name" value="TruB_bact"/>
    <property type="match status" value="1"/>
</dbReference>
<dbReference type="InterPro" id="IPR020103">
    <property type="entry name" value="PsdUridine_synth_cat_dom_sf"/>
</dbReference>
<dbReference type="InterPro" id="IPR002501">
    <property type="entry name" value="PsdUridine_synth_N"/>
</dbReference>
<dbReference type="InterPro" id="IPR014780">
    <property type="entry name" value="tRNA_psdUridine_synth_TruB"/>
</dbReference>
<dbReference type="InterPro" id="IPR032819">
    <property type="entry name" value="TruB_C"/>
</dbReference>
<dbReference type="NCBIfam" id="TIGR00431">
    <property type="entry name" value="TruB"/>
    <property type="match status" value="1"/>
</dbReference>
<dbReference type="PANTHER" id="PTHR13767:SF2">
    <property type="entry name" value="PSEUDOURIDYLATE SYNTHASE TRUB1"/>
    <property type="match status" value="1"/>
</dbReference>
<dbReference type="PANTHER" id="PTHR13767">
    <property type="entry name" value="TRNA-PSEUDOURIDINE SYNTHASE"/>
    <property type="match status" value="1"/>
</dbReference>
<dbReference type="Pfam" id="PF16198">
    <property type="entry name" value="TruB_C_2"/>
    <property type="match status" value="1"/>
</dbReference>
<dbReference type="Pfam" id="PF01509">
    <property type="entry name" value="TruB_N"/>
    <property type="match status" value="1"/>
</dbReference>
<dbReference type="SUPFAM" id="SSF55120">
    <property type="entry name" value="Pseudouridine synthase"/>
    <property type="match status" value="1"/>
</dbReference>
<gene>
    <name evidence="1" type="primary">truB</name>
    <name type="ordered locus">ABC2225</name>
</gene>
<comment type="function">
    <text evidence="1">Responsible for synthesis of pseudouridine from uracil-55 in the psi GC loop of transfer RNAs.</text>
</comment>
<comment type="catalytic activity">
    <reaction evidence="1">
        <text>uridine(55) in tRNA = pseudouridine(55) in tRNA</text>
        <dbReference type="Rhea" id="RHEA:42532"/>
        <dbReference type="Rhea" id="RHEA-COMP:10101"/>
        <dbReference type="Rhea" id="RHEA-COMP:10102"/>
        <dbReference type="ChEBI" id="CHEBI:65314"/>
        <dbReference type="ChEBI" id="CHEBI:65315"/>
        <dbReference type="EC" id="5.4.99.25"/>
    </reaction>
</comment>
<comment type="similarity">
    <text evidence="1">Belongs to the pseudouridine synthase TruB family. Type 1 subfamily.</text>
</comment>
<proteinExistence type="inferred from homology"/>
<feature type="chain" id="PRO_0000121791" description="tRNA pseudouridine synthase B">
    <location>
        <begin position="1"/>
        <end position="302"/>
    </location>
</feature>
<feature type="active site" description="Nucleophile" evidence="1">
    <location>
        <position position="40"/>
    </location>
</feature>
<accession>Q5WFU5</accession>
<keyword id="KW-0413">Isomerase</keyword>
<keyword id="KW-1185">Reference proteome</keyword>
<keyword id="KW-0819">tRNA processing</keyword>
<protein>
    <recommendedName>
        <fullName evidence="1">tRNA pseudouridine synthase B</fullName>
        <ecNumber evidence="1">5.4.99.25</ecNumber>
    </recommendedName>
    <alternativeName>
        <fullName evidence="1">tRNA pseudouridine(55) synthase</fullName>
        <shortName evidence="1">Psi55 synthase</shortName>
    </alternativeName>
    <alternativeName>
        <fullName evidence="1">tRNA pseudouridylate synthase</fullName>
    </alternativeName>
    <alternativeName>
        <fullName evidence="1">tRNA-uridine isomerase</fullName>
    </alternativeName>
</protein>
<evidence type="ECO:0000255" key="1">
    <source>
        <dbReference type="HAMAP-Rule" id="MF_01080"/>
    </source>
</evidence>
<sequence length="302" mass="33599">MEPTGIVVLDKPKGWTSHDCVHQMRKWFQTRKVGHTGTLDPEVDGVLPICIGKATKVVKYMSDYDKTYIGEVTFGVATTTEDAHGEVVEEKRVNKPFTRTEIEALLQAFIGKIEQTPPYYSAVKVNGKRLYEYARAGIEVERPTRTVEIKALTLTEITTAKPGCFSFAFSVTCTKGTYIRTLAVDIGKKAGYPAHMSKLTRTASGPFTQADAIPLSAFAEMSLDERLNKLRPLDTALQHFPRVTADKELEKRIRNGAVLEKSASFGDGRFLFYNEQGDCLALYQAHPTKAGLIKPETLFCHV</sequence>
<name>TRUB_SHOC1</name>
<organism>
    <name type="scientific">Shouchella clausii (strain KSM-K16)</name>
    <name type="common">Alkalihalobacillus clausii</name>
    <dbReference type="NCBI Taxonomy" id="66692"/>
    <lineage>
        <taxon>Bacteria</taxon>
        <taxon>Bacillati</taxon>
        <taxon>Bacillota</taxon>
        <taxon>Bacilli</taxon>
        <taxon>Bacillales</taxon>
        <taxon>Bacillaceae</taxon>
        <taxon>Shouchella</taxon>
    </lineage>
</organism>